<feature type="chain" id="PRO_0000180486" description="DNA primase">
    <location>
        <begin position="1"/>
        <end position="590"/>
    </location>
</feature>
<feature type="domain" description="Toprim" evidence="1">
    <location>
        <begin position="253"/>
        <end position="333"/>
    </location>
</feature>
<feature type="zinc finger region" description="CHC2-type" evidence="1">
    <location>
        <begin position="37"/>
        <end position="61"/>
    </location>
</feature>
<feature type="binding site" evidence="1">
    <location>
        <position position="259"/>
    </location>
    <ligand>
        <name>Mg(2+)</name>
        <dbReference type="ChEBI" id="CHEBI:18420"/>
        <label>1</label>
        <note>catalytic</note>
    </ligand>
</feature>
<feature type="binding site" evidence="1">
    <location>
        <position position="304"/>
    </location>
    <ligand>
        <name>Mg(2+)</name>
        <dbReference type="ChEBI" id="CHEBI:18420"/>
        <label>1</label>
        <note>catalytic</note>
    </ligand>
</feature>
<feature type="binding site" evidence="1">
    <location>
        <position position="304"/>
    </location>
    <ligand>
        <name>Mg(2+)</name>
        <dbReference type="ChEBI" id="CHEBI:18420"/>
        <label>2</label>
    </ligand>
</feature>
<feature type="binding site" evidence="1">
    <location>
        <position position="306"/>
    </location>
    <ligand>
        <name>Mg(2+)</name>
        <dbReference type="ChEBI" id="CHEBI:18420"/>
        <label>2</label>
    </ligand>
</feature>
<accession>Q9Z6W4</accession>
<accession>Q9JQD9</accession>
<accession>Q9K1V3</accession>
<dbReference type="EC" id="2.7.7.101" evidence="1"/>
<dbReference type="EMBL" id="AE001363">
    <property type="protein sequence ID" value="AAD19080.1"/>
    <property type="molecule type" value="Genomic_DNA"/>
</dbReference>
<dbReference type="EMBL" id="AE002161">
    <property type="protein sequence ID" value="AAF38704.1"/>
    <property type="molecule type" value="Genomic_DNA"/>
</dbReference>
<dbReference type="EMBL" id="BA000008">
    <property type="protein sequence ID" value="BAA99150.1"/>
    <property type="molecule type" value="Genomic_DNA"/>
</dbReference>
<dbReference type="EMBL" id="AE009440">
    <property type="protein sequence ID" value="AAP98906.1"/>
    <property type="molecule type" value="Genomic_DNA"/>
</dbReference>
<dbReference type="PIR" id="A81525">
    <property type="entry name" value="A81525"/>
</dbReference>
<dbReference type="PIR" id="D86608">
    <property type="entry name" value="D86608"/>
</dbReference>
<dbReference type="PIR" id="E72015">
    <property type="entry name" value="E72015"/>
</dbReference>
<dbReference type="RefSeq" id="NP_225137.1">
    <property type="nucleotide sequence ID" value="NC_000922.1"/>
</dbReference>
<dbReference type="RefSeq" id="WP_010883577.1">
    <property type="nucleotide sequence ID" value="NZ_LN847257.1"/>
</dbReference>
<dbReference type="SMR" id="Q9Z6W4"/>
<dbReference type="STRING" id="406984.CPK_ORF00355"/>
<dbReference type="GeneID" id="45050998"/>
<dbReference type="KEGG" id="cpa:CP_0919"/>
<dbReference type="KEGG" id="cpj:dnaG"/>
<dbReference type="KEGG" id="cpn:CPn_0942"/>
<dbReference type="KEGG" id="cpt:CpB0977"/>
<dbReference type="PATRIC" id="fig|115713.3.peg.1030"/>
<dbReference type="eggNOG" id="COG0358">
    <property type="taxonomic scope" value="Bacteria"/>
</dbReference>
<dbReference type="HOGENOM" id="CLU_013501_3_3_0"/>
<dbReference type="OrthoDB" id="9803773at2"/>
<dbReference type="Proteomes" id="UP000000583">
    <property type="component" value="Chromosome"/>
</dbReference>
<dbReference type="Proteomes" id="UP000000801">
    <property type="component" value="Chromosome"/>
</dbReference>
<dbReference type="GO" id="GO:0005737">
    <property type="term" value="C:cytoplasm"/>
    <property type="evidence" value="ECO:0007669"/>
    <property type="project" value="TreeGrafter"/>
</dbReference>
<dbReference type="GO" id="GO:0000428">
    <property type="term" value="C:DNA-directed RNA polymerase complex"/>
    <property type="evidence" value="ECO:0007669"/>
    <property type="project" value="UniProtKB-KW"/>
</dbReference>
<dbReference type="GO" id="GO:1990077">
    <property type="term" value="C:primosome complex"/>
    <property type="evidence" value="ECO:0007669"/>
    <property type="project" value="UniProtKB-KW"/>
</dbReference>
<dbReference type="GO" id="GO:0003677">
    <property type="term" value="F:DNA binding"/>
    <property type="evidence" value="ECO:0007669"/>
    <property type="project" value="UniProtKB-KW"/>
</dbReference>
<dbReference type="GO" id="GO:0003899">
    <property type="term" value="F:DNA-directed RNA polymerase activity"/>
    <property type="evidence" value="ECO:0007669"/>
    <property type="project" value="InterPro"/>
</dbReference>
<dbReference type="GO" id="GO:0008270">
    <property type="term" value="F:zinc ion binding"/>
    <property type="evidence" value="ECO:0007669"/>
    <property type="project" value="UniProtKB-UniRule"/>
</dbReference>
<dbReference type="GO" id="GO:0006269">
    <property type="term" value="P:DNA replication, synthesis of primer"/>
    <property type="evidence" value="ECO:0007669"/>
    <property type="project" value="UniProtKB-UniRule"/>
</dbReference>
<dbReference type="CDD" id="cd03364">
    <property type="entry name" value="TOPRIM_DnaG_primases"/>
    <property type="match status" value="1"/>
</dbReference>
<dbReference type="FunFam" id="3.90.580.10:FF:000001">
    <property type="entry name" value="DNA primase"/>
    <property type="match status" value="1"/>
</dbReference>
<dbReference type="Gene3D" id="3.40.1360.10">
    <property type="match status" value="1"/>
</dbReference>
<dbReference type="Gene3D" id="3.90.980.10">
    <property type="entry name" value="DNA primase, catalytic core, N-terminal domain"/>
    <property type="match status" value="1"/>
</dbReference>
<dbReference type="Gene3D" id="3.90.580.10">
    <property type="entry name" value="Zinc finger, CHC2-type domain"/>
    <property type="match status" value="1"/>
</dbReference>
<dbReference type="HAMAP" id="MF_00974">
    <property type="entry name" value="DNA_primase_DnaG"/>
    <property type="match status" value="1"/>
</dbReference>
<dbReference type="InterPro" id="IPR037068">
    <property type="entry name" value="DNA_primase_core_N_sf"/>
</dbReference>
<dbReference type="InterPro" id="IPR006295">
    <property type="entry name" value="DNA_primase_DnaG"/>
</dbReference>
<dbReference type="InterPro" id="IPR036977">
    <property type="entry name" value="DNA_primase_Znf_CHC2"/>
</dbReference>
<dbReference type="InterPro" id="IPR030846">
    <property type="entry name" value="DnaG_bac"/>
</dbReference>
<dbReference type="InterPro" id="IPR013264">
    <property type="entry name" value="DNAG_N"/>
</dbReference>
<dbReference type="InterPro" id="IPR050219">
    <property type="entry name" value="DnaG_primase"/>
</dbReference>
<dbReference type="InterPro" id="IPR034151">
    <property type="entry name" value="TOPRIM_DnaG_bac"/>
</dbReference>
<dbReference type="InterPro" id="IPR006171">
    <property type="entry name" value="TOPRIM_dom"/>
</dbReference>
<dbReference type="InterPro" id="IPR002694">
    <property type="entry name" value="Znf_CHC2"/>
</dbReference>
<dbReference type="NCBIfam" id="TIGR01391">
    <property type="entry name" value="dnaG"/>
    <property type="match status" value="1"/>
</dbReference>
<dbReference type="PANTHER" id="PTHR30313">
    <property type="entry name" value="DNA PRIMASE"/>
    <property type="match status" value="1"/>
</dbReference>
<dbReference type="PANTHER" id="PTHR30313:SF2">
    <property type="entry name" value="DNA PRIMASE"/>
    <property type="match status" value="1"/>
</dbReference>
<dbReference type="Pfam" id="PF08275">
    <property type="entry name" value="DNAG_N"/>
    <property type="match status" value="1"/>
</dbReference>
<dbReference type="Pfam" id="PF13155">
    <property type="entry name" value="Toprim_2"/>
    <property type="match status" value="1"/>
</dbReference>
<dbReference type="Pfam" id="PF01807">
    <property type="entry name" value="Zn_ribbon_DnaG"/>
    <property type="match status" value="1"/>
</dbReference>
<dbReference type="PIRSF" id="PIRSF002811">
    <property type="entry name" value="DnaG"/>
    <property type="match status" value="1"/>
</dbReference>
<dbReference type="SMART" id="SM00493">
    <property type="entry name" value="TOPRIM"/>
    <property type="match status" value="1"/>
</dbReference>
<dbReference type="SMART" id="SM00400">
    <property type="entry name" value="ZnF_CHCC"/>
    <property type="match status" value="1"/>
</dbReference>
<dbReference type="SUPFAM" id="SSF56731">
    <property type="entry name" value="DNA primase core"/>
    <property type="match status" value="1"/>
</dbReference>
<dbReference type="SUPFAM" id="SSF57783">
    <property type="entry name" value="Zinc beta-ribbon"/>
    <property type="match status" value="1"/>
</dbReference>
<dbReference type="PROSITE" id="PS50880">
    <property type="entry name" value="TOPRIM"/>
    <property type="match status" value="1"/>
</dbReference>
<proteinExistence type="inferred from homology"/>
<name>DNAG_CHLPN</name>
<gene>
    <name evidence="1" type="primary">dnaG</name>
    <name type="ordered locus">CPn_0942</name>
    <name type="ordered locus">CP_0919</name>
    <name type="ordered locus">CpB0977</name>
</gene>
<protein>
    <recommendedName>
        <fullName evidence="1">DNA primase</fullName>
        <ecNumber evidence="1">2.7.7.101</ecNumber>
    </recommendedName>
</protein>
<organism>
    <name type="scientific">Chlamydia pneumoniae</name>
    <name type="common">Chlamydophila pneumoniae</name>
    <dbReference type="NCBI Taxonomy" id="83558"/>
    <lineage>
        <taxon>Bacteria</taxon>
        <taxon>Pseudomonadati</taxon>
        <taxon>Chlamydiota</taxon>
        <taxon>Chlamydiia</taxon>
        <taxon>Chlamydiales</taxon>
        <taxon>Chlamydiaceae</taxon>
        <taxon>Chlamydia/Chlamydophila group</taxon>
        <taxon>Chlamydia</taxon>
    </lineage>
</organism>
<evidence type="ECO:0000255" key="1">
    <source>
        <dbReference type="HAMAP-Rule" id="MF_00974"/>
    </source>
</evidence>
<keyword id="KW-0235">DNA replication</keyword>
<keyword id="KW-0238">DNA-binding</keyword>
<keyword id="KW-0240">DNA-directed RNA polymerase</keyword>
<keyword id="KW-0460">Magnesium</keyword>
<keyword id="KW-0479">Metal-binding</keyword>
<keyword id="KW-0548">Nucleotidyltransferase</keyword>
<keyword id="KW-0639">Primosome</keyword>
<keyword id="KW-0804">Transcription</keyword>
<keyword id="KW-0808">Transferase</keyword>
<keyword id="KW-0862">Zinc</keyword>
<keyword id="KW-0863">Zinc-finger</keyword>
<comment type="function">
    <text evidence="1">RNA polymerase that catalyzes the synthesis of short RNA molecules used as primers for DNA polymerase during DNA replication.</text>
</comment>
<comment type="catalytic activity">
    <reaction evidence="1">
        <text>ssDNA + n NTP = ssDNA/pppN(pN)n-1 hybrid + (n-1) diphosphate.</text>
        <dbReference type="EC" id="2.7.7.101"/>
    </reaction>
</comment>
<comment type="cofactor">
    <cofactor evidence="1">
        <name>Zn(2+)</name>
        <dbReference type="ChEBI" id="CHEBI:29105"/>
    </cofactor>
    <text evidence="1">Binds 1 zinc ion per monomer.</text>
</comment>
<comment type="cofactor">
    <cofactor evidence="1">
        <name>Mg(2+)</name>
        <dbReference type="ChEBI" id="CHEBI:18420"/>
    </cofactor>
    <text evidence="1">Binds two Mg(2+) per subunit.</text>
</comment>
<comment type="subunit">
    <text evidence="1">Monomer. Interacts with DnaB.</text>
</comment>
<comment type="domain">
    <text evidence="1">Contains an N-terminal zinc-binding domain, a central core domain that contains the primase activity, and a C-terminal DnaB-binding domain.</text>
</comment>
<comment type="similarity">
    <text evidence="1">Belongs to the DnaG primase family.</text>
</comment>
<sequence length="590" mass="67642">MYTEESLDNLRHSIDIVDVLSEHIHLKRSGATYKACCPFHTEKTPSFIVNPAGAHYHCFGCGAHGDAIGFLMQHLGYSFTEAILVLSKKFQVDLVLQPKDSGYTPPQGLKEELRHINSEAETFFRYCLYHLPEARHALQYLYHRGFSPDTIDRFHLGYGPEQSLFLQAMEERKISQEQLHTAGFFGNKWFLFARRIIFPVHDALGHTIGFSARKFLENSQGGKYVNTPETPIFKKSRILFGLNFSRRRIAKEKKVILVEGQADCLQMIDSGFNCTVAAQGTAFTEEHVKELSKLGVLKVFLLFDSDEAGNKAALRVGDLCQTAQMSVFVCKLPQGHDPDSFLMQRGSSGLIALLEQSQDYLTFLISEKMSSYPKFGPREKALLVEEAIRQIKHWGSPILVYEHLKQLASLMMVPEDMVLSLANPQVTAEPQNIPIKQKVPKIHPHIVMETDILRCMLFCGSNTKILYTAQFYFVPEDFKHPECRKLFAFMISYYEKYRKNVPFDEACQVLSDSQILQLLTKRRLNTEALDTIFVQSLQKMADRRWREQCKPLSLNQNIQDKKLEILEDYVQLRKDRTIITLLDPESELIP</sequence>
<reference key="1">
    <citation type="journal article" date="1999" name="Nat. Genet.">
        <title>Comparative genomes of Chlamydia pneumoniae and C. trachomatis.</title>
        <authorList>
            <person name="Kalman S."/>
            <person name="Mitchell W.P."/>
            <person name="Marathe R."/>
            <person name="Lammel C.J."/>
            <person name="Fan J."/>
            <person name="Hyman R.W."/>
            <person name="Olinger L."/>
            <person name="Grimwood J."/>
            <person name="Davis R.W."/>
            <person name="Stephens R.S."/>
        </authorList>
    </citation>
    <scope>NUCLEOTIDE SEQUENCE [LARGE SCALE GENOMIC DNA]</scope>
    <source>
        <strain>CWL029</strain>
    </source>
</reference>
<reference key="2">
    <citation type="journal article" date="2000" name="Nucleic Acids Res.">
        <title>Genome sequences of Chlamydia trachomatis MoPn and Chlamydia pneumoniae AR39.</title>
        <authorList>
            <person name="Read T.D."/>
            <person name="Brunham R.C."/>
            <person name="Shen C."/>
            <person name="Gill S.R."/>
            <person name="Heidelberg J.F."/>
            <person name="White O."/>
            <person name="Hickey E.K."/>
            <person name="Peterson J.D."/>
            <person name="Utterback T.R."/>
            <person name="Berry K.J."/>
            <person name="Bass S."/>
            <person name="Linher K.D."/>
            <person name="Weidman J.F."/>
            <person name="Khouri H.M."/>
            <person name="Craven B."/>
            <person name="Bowman C."/>
            <person name="Dodson R.J."/>
            <person name="Gwinn M.L."/>
            <person name="Nelson W.C."/>
            <person name="DeBoy R.T."/>
            <person name="Kolonay J.F."/>
            <person name="McClarty G."/>
            <person name="Salzberg S.L."/>
            <person name="Eisen J.A."/>
            <person name="Fraser C.M."/>
        </authorList>
    </citation>
    <scope>NUCLEOTIDE SEQUENCE [LARGE SCALE GENOMIC DNA]</scope>
    <source>
        <strain>AR39</strain>
    </source>
</reference>
<reference key="3">
    <citation type="journal article" date="2000" name="Nucleic Acids Res.">
        <title>Comparison of whole genome sequences of Chlamydia pneumoniae J138 from Japan and CWL029 from USA.</title>
        <authorList>
            <person name="Shirai M."/>
            <person name="Hirakawa H."/>
            <person name="Kimoto M."/>
            <person name="Tabuchi M."/>
            <person name="Kishi F."/>
            <person name="Ouchi K."/>
            <person name="Shiba T."/>
            <person name="Ishii K."/>
            <person name="Hattori M."/>
            <person name="Kuhara S."/>
            <person name="Nakazawa T."/>
        </authorList>
    </citation>
    <scope>NUCLEOTIDE SEQUENCE [LARGE SCALE GENOMIC DNA]</scope>
    <source>
        <strain>J138</strain>
    </source>
</reference>
<reference key="4">
    <citation type="submission" date="2002-05" db="EMBL/GenBank/DDBJ databases">
        <title>The genome sequence of Chlamydia pneumoniae TW183 and comparison with other Chlamydia strains based on whole genome sequence analysis.</title>
        <authorList>
            <person name="Geng M.M."/>
            <person name="Schuhmacher A."/>
            <person name="Muehldorfer I."/>
            <person name="Bensch K.W."/>
            <person name="Schaefer K.P."/>
            <person name="Schneider S."/>
            <person name="Pohl T."/>
            <person name="Essig A."/>
            <person name="Marre R."/>
            <person name="Melchers K."/>
        </authorList>
    </citation>
    <scope>NUCLEOTIDE SEQUENCE [LARGE SCALE GENOMIC DNA]</scope>
    <source>
        <strain>TW-183</strain>
    </source>
</reference>